<keyword id="KW-0963">Cytoplasm</keyword>
<keyword id="KW-0460">Magnesium</keyword>
<keyword id="KW-0479">Metal-binding</keyword>
<keyword id="KW-0489">Methyltransferase</keyword>
<keyword id="KW-1185">Reference proteome</keyword>
<keyword id="KW-0694">RNA-binding</keyword>
<keyword id="KW-0943">RNA-mediated gene silencing</keyword>
<keyword id="KW-0949">S-adenosyl-L-methionine</keyword>
<keyword id="KW-0808">Transferase</keyword>
<gene>
    <name type="primary">HENMT1</name>
    <name type="ORF">QtsA-13748</name>
</gene>
<comment type="function">
    <text evidence="2">Methyltransferase that adds a 2'-O-methyl group at the 3'-end of piRNAs, a class of 24 to 30 nucleotide RNAs that are generated by a Dicer-independent mechanism and are primarily derived from transposons and other repeated sequence elements. This probably protects the 3'-end of piRNAs from uridylation activity and subsequent degradation. Stabilization of piRNAs is essential for gametogenesis.</text>
</comment>
<comment type="catalytic activity">
    <reaction evidence="2">
        <text>small RNA 3'-end nucleotide + S-adenosyl-L-methionine = small RNA 3'-end 2'-O-methylnucleotide + S-adenosyl-L-homocysteine + H(+)</text>
        <dbReference type="Rhea" id="RHEA:37887"/>
        <dbReference type="Rhea" id="RHEA-COMP:10415"/>
        <dbReference type="Rhea" id="RHEA-COMP:10416"/>
        <dbReference type="ChEBI" id="CHEBI:15378"/>
        <dbReference type="ChEBI" id="CHEBI:57856"/>
        <dbReference type="ChEBI" id="CHEBI:59789"/>
        <dbReference type="ChEBI" id="CHEBI:74896"/>
        <dbReference type="ChEBI" id="CHEBI:74898"/>
        <dbReference type="EC" id="2.1.1.386"/>
    </reaction>
</comment>
<comment type="cofactor">
    <cofactor evidence="3">
        <name>Mg(2+)</name>
        <dbReference type="ChEBI" id="CHEBI:18420"/>
    </cofactor>
    <text evidence="3">Binds 1 Mg(2+) ion per subunit.</text>
</comment>
<comment type="subcellular location">
    <subcellularLocation>
        <location evidence="1">Cytoplasm</location>
    </subcellularLocation>
    <text evidence="1">Component of the meiotic nuage, also named P granule, a germ-cell-specific organelle required to repress transposon activity during meiosis.</text>
</comment>
<comment type="similarity">
    <text evidence="5">Belongs to the methyltransferase superfamily. HEN1 family.</text>
</comment>
<proteinExistence type="evidence at transcript level"/>
<dbReference type="EC" id="2.1.1.386" evidence="2"/>
<dbReference type="EMBL" id="AB179150">
    <property type="protein sequence ID" value="BAE02201.1"/>
    <property type="molecule type" value="mRNA"/>
</dbReference>
<dbReference type="RefSeq" id="NP_001271484.1">
    <property type="nucleotide sequence ID" value="NM_001284555.1"/>
</dbReference>
<dbReference type="RefSeq" id="XP_045221950.1">
    <property type="nucleotide sequence ID" value="XM_045366015.2"/>
</dbReference>
<dbReference type="RefSeq" id="XP_045221954.1">
    <property type="nucleotide sequence ID" value="XM_045366019.2"/>
</dbReference>
<dbReference type="RefSeq" id="XP_045221961.1">
    <property type="nucleotide sequence ID" value="XM_045366026.2"/>
</dbReference>
<dbReference type="RefSeq" id="XP_045221967.1">
    <property type="nucleotide sequence ID" value="XM_045366032.2"/>
</dbReference>
<dbReference type="SMR" id="Q4R3W5"/>
<dbReference type="STRING" id="9541.ENSMFAP00000035591"/>
<dbReference type="Ensembl" id="ENSMFAT00000009809.2">
    <property type="protein sequence ID" value="ENSMFAP00000035571.1"/>
    <property type="gene ID" value="ENSMFAG00000002745.2"/>
</dbReference>
<dbReference type="GeneID" id="102140180"/>
<dbReference type="VEuPathDB" id="HostDB:ENSMFAG00000002745"/>
<dbReference type="eggNOG" id="KOG1045">
    <property type="taxonomic scope" value="Eukaryota"/>
</dbReference>
<dbReference type="GeneTree" id="ENSGT00390000004798"/>
<dbReference type="OMA" id="HQFVVDF"/>
<dbReference type="Proteomes" id="UP000233100">
    <property type="component" value="Chromosome 1"/>
</dbReference>
<dbReference type="Bgee" id="ENSMFAG00000002745">
    <property type="expression patterns" value="Expressed in temporal lobe and 4 other cell types or tissues"/>
</dbReference>
<dbReference type="GO" id="GO:0005634">
    <property type="term" value="C:nucleus"/>
    <property type="evidence" value="ECO:0007669"/>
    <property type="project" value="TreeGrafter"/>
</dbReference>
<dbReference type="GO" id="GO:0043186">
    <property type="term" value="C:P granule"/>
    <property type="evidence" value="ECO:0000250"/>
    <property type="project" value="UniProtKB"/>
</dbReference>
<dbReference type="GO" id="GO:0046872">
    <property type="term" value="F:metal ion binding"/>
    <property type="evidence" value="ECO:0007669"/>
    <property type="project" value="UniProtKB-KW"/>
</dbReference>
<dbReference type="GO" id="GO:0008171">
    <property type="term" value="F:O-methyltransferase activity"/>
    <property type="evidence" value="ECO:0000250"/>
    <property type="project" value="UniProtKB"/>
</dbReference>
<dbReference type="GO" id="GO:0003723">
    <property type="term" value="F:RNA binding"/>
    <property type="evidence" value="ECO:0007669"/>
    <property type="project" value="UniProtKB-KW"/>
</dbReference>
<dbReference type="GO" id="GO:0008173">
    <property type="term" value="F:RNA methyltransferase activity"/>
    <property type="evidence" value="ECO:0000250"/>
    <property type="project" value="UniProtKB"/>
</dbReference>
<dbReference type="GO" id="GO:0090486">
    <property type="term" value="F:small RNA 2'-O-methyltransferase activity"/>
    <property type="evidence" value="ECO:0007669"/>
    <property type="project" value="RHEA"/>
</dbReference>
<dbReference type="GO" id="GO:0034587">
    <property type="term" value="P:piRNA processing"/>
    <property type="evidence" value="ECO:0000250"/>
    <property type="project" value="UniProtKB"/>
</dbReference>
<dbReference type="GO" id="GO:0001510">
    <property type="term" value="P:RNA methylation"/>
    <property type="evidence" value="ECO:0000250"/>
    <property type="project" value="UniProtKB"/>
</dbReference>
<dbReference type="GO" id="GO:0030422">
    <property type="term" value="P:siRNA processing"/>
    <property type="evidence" value="ECO:0007669"/>
    <property type="project" value="TreeGrafter"/>
</dbReference>
<dbReference type="FunFam" id="3.40.50.150:FF:000124">
    <property type="entry name" value="HEN methyltransferase 1"/>
    <property type="match status" value="1"/>
</dbReference>
<dbReference type="Gene3D" id="3.40.50.150">
    <property type="entry name" value="Vaccinia Virus protein VP39"/>
    <property type="match status" value="1"/>
</dbReference>
<dbReference type="InterPro" id="IPR026610">
    <property type="entry name" value="Hen1"/>
</dbReference>
<dbReference type="InterPro" id="IPR029063">
    <property type="entry name" value="SAM-dependent_MTases_sf"/>
</dbReference>
<dbReference type="PANTHER" id="PTHR21404">
    <property type="entry name" value="HEN1"/>
    <property type="match status" value="1"/>
</dbReference>
<dbReference type="PANTHER" id="PTHR21404:SF3">
    <property type="entry name" value="SMALL RNA 2'-O-METHYLTRANSFERASE"/>
    <property type="match status" value="1"/>
</dbReference>
<dbReference type="Pfam" id="PF13489">
    <property type="entry name" value="Methyltransf_23"/>
    <property type="match status" value="1"/>
</dbReference>
<dbReference type="SUPFAM" id="SSF53335">
    <property type="entry name" value="S-adenosyl-L-methionine-dependent methyltransferases"/>
    <property type="match status" value="1"/>
</dbReference>
<evidence type="ECO:0000250" key="1">
    <source>
        <dbReference type="UniProtKB" id="Q568P9"/>
    </source>
</evidence>
<evidence type="ECO:0000250" key="2">
    <source>
        <dbReference type="UniProtKB" id="Q8CAE2"/>
    </source>
</evidence>
<evidence type="ECO:0000250" key="3">
    <source>
        <dbReference type="UniProtKB" id="Q9C5Q8"/>
    </source>
</evidence>
<evidence type="ECO:0000256" key="4">
    <source>
        <dbReference type="SAM" id="MobiDB-lite"/>
    </source>
</evidence>
<evidence type="ECO:0000305" key="5"/>
<name>HENMT_MACFA</name>
<feature type="chain" id="PRO_0000304140" description="Small RNA 2'-O-methyltransferase">
    <location>
        <begin position="1"/>
        <end position="393"/>
    </location>
</feature>
<feature type="region of interest" description="Disordered" evidence="4">
    <location>
        <begin position="283"/>
        <end position="309"/>
    </location>
</feature>
<feature type="compositionally biased region" description="Basic and acidic residues" evidence="4">
    <location>
        <begin position="290"/>
        <end position="305"/>
    </location>
</feature>
<feature type="binding site" evidence="3">
    <location>
        <position position="60"/>
    </location>
    <ligand>
        <name>S-adenosyl-L-methionine</name>
        <dbReference type="ChEBI" id="CHEBI:59789"/>
    </ligand>
</feature>
<feature type="binding site" evidence="3">
    <location>
        <position position="78"/>
    </location>
    <ligand>
        <name>S-adenosyl-L-methionine</name>
        <dbReference type="ChEBI" id="CHEBI:59789"/>
    </ligand>
</feature>
<feature type="binding site" evidence="3">
    <location>
        <position position="114"/>
    </location>
    <ligand>
        <name>S-adenosyl-L-methionine</name>
        <dbReference type="ChEBI" id="CHEBI:59789"/>
    </ligand>
</feature>
<feature type="binding site" evidence="3">
    <location>
        <position position="132"/>
    </location>
    <ligand>
        <name>Mg(2+)</name>
        <dbReference type="ChEBI" id="CHEBI:18420"/>
    </ligand>
</feature>
<feature type="binding site" evidence="3">
    <location>
        <position position="135"/>
    </location>
    <ligand>
        <name>Mg(2+)</name>
        <dbReference type="ChEBI" id="CHEBI:18420"/>
    </ligand>
</feature>
<feature type="binding site" evidence="3">
    <location>
        <position position="136"/>
    </location>
    <ligand>
        <name>Mg(2+)</name>
        <dbReference type="ChEBI" id="CHEBI:18420"/>
    </ligand>
</feature>
<feature type="binding site" evidence="3">
    <location>
        <position position="181"/>
    </location>
    <ligand>
        <name>Mg(2+)</name>
        <dbReference type="ChEBI" id="CHEBI:18420"/>
    </ligand>
</feature>
<accession>Q4R3W5</accession>
<reference key="1">
    <citation type="submission" date="2005-06" db="EMBL/GenBank/DDBJ databases">
        <title>DNA sequences of macaque genes expressed in brain or testis and its evolutionary implications.</title>
        <authorList>
            <consortium name="International consortium for macaque cDNA sequencing and analysis"/>
        </authorList>
    </citation>
    <scope>NUCLEOTIDE SEQUENCE [LARGE SCALE MRNA]</scope>
    <source>
        <tissue>Testis</tissue>
    </source>
</reference>
<protein>
    <recommendedName>
        <fullName>Small RNA 2'-O-methyltransferase</fullName>
        <ecNumber evidence="2">2.1.1.386</ecNumber>
    </recommendedName>
    <alternativeName>
        <fullName>HEN1 methyltransferase homolog 1</fullName>
    </alternativeName>
</protein>
<organism>
    <name type="scientific">Macaca fascicularis</name>
    <name type="common">Crab-eating macaque</name>
    <name type="synonym">Cynomolgus monkey</name>
    <dbReference type="NCBI Taxonomy" id="9541"/>
    <lineage>
        <taxon>Eukaryota</taxon>
        <taxon>Metazoa</taxon>
        <taxon>Chordata</taxon>
        <taxon>Craniata</taxon>
        <taxon>Vertebrata</taxon>
        <taxon>Euteleostomi</taxon>
        <taxon>Mammalia</taxon>
        <taxon>Eutheria</taxon>
        <taxon>Euarchontoglires</taxon>
        <taxon>Primates</taxon>
        <taxon>Haplorrhini</taxon>
        <taxon>Catarrhini</taxon>
        <taxon>Cercopithecidae</taxon>
        <taxon>Cercopithecinae</taxon>
        <taxon>Macaca</taxon>
    </lineage>
</organism>
<sequence length="393" mass="44573">MEENNLQCSSVVDGNFEEVPRETAIQFKPPLYRQRYQFVKNLVDQHEPKKVADLGCGDTSLLRLLKVNPCIELLVGVDINEDKLRWRGDSLAPFMGDFLKPRDLNLTIILYHGSVVERDSRLLGFDLITCIELIEHLDSGDLARFPEVVFGYLSPSMIVISTPNSEFNPLFPSVTLRDSDHKFEWTRMEFQTWALYVANRYDYSVEFTGVGEPPAGAENVGYCTQIGIFQKNGGRATEACVSEQHDQHVYKAVFTTSYPSLQQERFFKLVLVNEVSQQVESLRVSHLPRRKEQDGEQGDKPKDIGGSKAPVPCFGPVFTEVEKAKIENSPKPFCVGDKFFVPLQRLLAYPRLNRLCANEEMMRSVIADSIPLSSDGSAVVTDLCNYFDEQFEF</sequence>